<feature type="chain" id="PRO_0000442711" description="Major capsid protein VP1">
    <location>
        <begin position="1"/>
        <end position="378"/>
    </location>
</feature>
<feature type="region of interest" description="Disordered" evidence="2">
    <location>
        <begin position="1"/>
        <end position="21"/>
    </location>
</feature>
<organismHost>
    <name type="scientific">Homo sapiens</name>
    <name type="common">Human</name>
    <dbReference type="NCBI Taxonomy" id="9606"/>
</organismHost>
<organism>
    <name type="scientific">KI polyomavirus (isolate Stockholm 380)</name>
    <name type="common">KIPyV</name>
    <dbReference type="NCBI Taxonomy" id="423448"/>
    <lineage>
        <taxon>Viruses</taxon>
        <taxon>Monodnaviria</taxon>
        <taxon>Shotokuvirae</taxon>
        <taxon>Cossaviricota</taxon>
        <taxon>Papovaviricetes</taxon>
        <taxon>Sepolyvirales</taxon>
        <taxon>Polyomaviridae</taxon>
        <taxon>Betapolyomavirus</taxon>
        <taxon>Betapolyomavirus tertihominis</taxon>
    </lineage>
</organism>
<evidence type="ECO:0000250" key="1">
    <source>
        <dbReference type="UniProtKB" id="P03087"/>
    </source>
</evidence>
<evidence type="ECO:0000256" key="2">
    <source>
        <dbReference type="SAM" id="MobiDB-lite"/>
    </source>
</evidence>
<evidence type="ECO:0000305" key="3"/>
<evidence type="ECO:0000305" key="4">
    <source>
    </source>
</evidence>
<accession>P0DOI4</accession>
<accession>A3R4M8</accession>
<accession>A3R4N3</accession>
<accession>A3R4N8</accession>
<dbReference type="EMBL" id="EF127908">
    <property type="protein sequence ID" value="ABN09927.1"/>
    <property type="molecule type" value="Genomic_DNA"/>
</dbReference>
<dbReference type="SMR" id="P0DOI4"/>
<dbReference type="Proteomes" id="UP000166765">
    <property type="component" value="Genome"/>
</dbReference>
<dbReference type="GO" id="GO:0042025">
    <property type="term" value="C:host cell nucleus"/>
    <property type="evidence" value="ECO:0007669"/>
    <property type="project" value="UniProtKB-SubCell"/>
</dbReference>
<dbReference type="GO" id="GO:0039620">
    <property type="term" value="C:T=7 icosahedral viral capsid"/>
    <property type="evidence" value="ECO:0007669"/>
    <property type="project" value="UniProtKB-KW"/>
</dbReference>
<dbReference type="GO" id="GO:0005198">
    <property type="term" value="F:structural molecule activity"/>
    <property type="evidence" value="ECO:0007669"/>
    <property type="project" value="InterPro"/>
</dbReference>
<dbReference type="GO" id="GO:0075509">
    <property type="term" value="P:endocytosis involved in viral entry into host cell"/>
    <property type="evidence" value="ECO:0007669"/>
    <property type="project" value="UniProtKB-KW"/>
</dbReference>
<dbReference type="GO" id="GO:0019062">
    <property type="term" value="P:virion attachment to host cell"/>
    <property type="evidence" value="ECO:0007669"/>
    <property type="project" value="UniProtKB-KW"/>
</dbReference>
<dbReference type="Gene3D" id="2.60.175.10">
    <property type="entry name" value="Capsid protein VP1,Polyomavirus"/>
    <property type="match status" value="1"/>
</dbReference>
<dbReference type="InterPro" id="IPR000662">
    <property type="entry name" value="Capsid_VP1_Polyomavir"/>
</dbReference>
<dbReference type="InterPro" id="IPR011222">
    <property type="entry name" value="dsDNA_vir_gr_I_capsid"/>
</dbReference>
<dbReference type="InterPro" id="IPR036931">
    <property type="entry name" value="Polyomavir_VP1_sf"/>
</dbReference>
<dbReference type="Pfam" id="PF00718">
    <property type="entry name" value="Polyoma_coat"/>
    <property type="match status" value="1"/>
</dbReference>
<dbReference type="SUPFAM" id="SSF88648">
    <property type="entry name" value="Group I dsDNA viruses"/>
    <property type="match status" value="1"/>
</dbReference>
<sequence>MSCTPCRPQKRLTRPRSQVPRVQTLATEVKKGGVEVLAAVPLSEETEFKVELFVKPVIGNTTAAQDGREPTPHYWSISSAIHDKESGSSIKVEETPDADTTVCYSLAEIAPPDIPNQVSECDMKVWELYRMETELLVVPLVNALGNTNGVVHGLAGTQLYFWAVGGQPLDVVGVTPTDKYKGPTTYTINPPGDPRTLHVYNSNTPKAKVTSERYSVESWAPDPSRNDNCRYFGRVVGGAATPPVVSYGNNSTIPLLDENGIGILCLQGRLYITCADMLGTANSRIHTPMARFFRLHFRQRRVKNPFTMNVLYKQVFNRPTETVDAQVGVTEVTMVEEIGPLPPSIQTTLPTSVNLTQLPRTVTLQSQAPLLNTQQNSK</sequence>
<name>VP1_POVK3</name>
<protein>
    <recommendedName>
        <fullName>Major capsid protein VP1</fullName>
    </recommendedName>
    <alternativeName>
        <fullName>Major structural protein VP1</fullName>
    </alternativeName>
</protein>
<proteinExistence type="inferred from homology"/>
<keyword id="KW-0024">Alternative initiation</keyword>
<keyword id="KW-0025">Alternative splicing</keyword>
<keyword id="KW-0167">Capsid protein</keyword>
<keyword id="KW-1015">Disulfide bond</keyword>
<keyword id="KW-1048">Host nucleus</keyword>
<keyword id="KW-0945">Host-virus interaction</keyword>
<keyword id="KW-0426">Late protein</keyword>
<keyword id="KW-1145">T=7 icosahedral capsid protein</keyword>
<keyword id="KW-1161">Viral attachment to host cell</keyword>
<keyword id="KW-1162">Viral penetration into host cytoplasm</keyword>
<keyword id="KW-0946">Virion</keyword>
<keyword id="KW-1164">Virus endocytosis by host</keyword>
<keyword id="KW-1160">Virus entry into host cell</keyword>
<reference key="1">
    <citation type="journal article" date="2007" name="J. Virol.">
        <title>Identification of a third human polyomavirus.</title>
        <authorList>
            <person name="Allander T."/>
            <person name="Andreasson K."/>
            <person name="Gupta S."/>
            <person name="Bjerkner A."/>
            <person name="Bogdanovic G."/>
            <person name="Persson M.A."/>
            <person name="Dalianis T."/>
            <person name="Ramqvist T."/>
            <person name="Andersson B."/>
        </authorList>
    </citation>
    <scope>NUCLEOTIDE SEQUENCE [GENOMIC DNA]</scope>
</reference>
<reference key="2">
    <citation type="journal article" date="2009" name="Virology">
        <title>The Polyomaviridae: Contributions of virus structure to our understanding of virus receptors and infectious entry.</title>
        <authorList>
            <person name="Neu U."/>
            <person name="Stehle T."/>
            <person name="Atwood W.J."/>
        </authorList>
    </citation>
    <scope>REVIEW</scope>
</reference>
<comment type="function">
    <text evidence="1 4">Forms an icosahedral capsid with a T=7 symmetry and a 40 nm diameter. The capsid is composed of 72 pentamers linked to each other by disulfide bonds and associated with VP2 or VP3 proteins. Interacts with sialic acids on the cell surface to provide virion attachment to target cell. Once attached, the virion is internalized by endocytosis and traffics to the endoplasmic reticulum. Inside the endoplasmic reticulum, the protein folding machinery isomerizes VP1 interpentamer disulfide bonds, thereby triggering initial uncoating. Next, the virion uses the endoplasmic reticulum-associated degradation machinery to probably translocate in the cytosol before reaching the nucleus. Nuclear entry of the viral DNA involves the selective exposure and importin recognition of VP2/Vp3 nuclear localization signal. In late phase of infection, neo-synthesized VP1 encapsulates replicated genomic DNA in the nucleus, and participates in rearranging nucleosomes around the viral DNA.</text>
</comment>
<comment type="subunit">
    <text evidence="1">Homomultimer. The virus capsid is composed of 72 icosahedral units, each one composed of five disulfide-linked copies of VP1. Interacts with minor capsid proteins VP2 and VP3.</text>
</comment>
<comment type="subcellular location">
    <subcellularLocation>
        <location evidence="1">Virion</location>
    </subcellularLocation>
    <subcellularLocation>
        <location evidence="1">Host nucleus</location>
    </subcellularLocation>
</comment>
<comment type="alternative products">
    <event type="alternative splicing"/>
    <event type="alternative initiation"/>
    <isoform>
        <id>P0DOI4-1</id>
        <id>A3R4N3-1</id>
        <name>VP1</name>
        <sequence type="displayed"/>
    </isoform>
    <isoform>
        <id>P0DOJ3-1</id>
        <id>A3R4N1-1</id>
        <name>VP2</name>
        <name>Minor capsid protein VP2</name>
        <sequence type="external"/>
    </isoform>
    <isoform>
        <id>P0DOJ3-2</id>
        <id>A3R4N1-2</id>
        <name>VP3</name>
        <name>Minor capsid protein VP3</name>
        <sequence type="external"/>
    </isoform>
</comment>
<comment type="miscellaneous">
    <molecule>Isoform VP1</molecule>
    <text>Produced by alternative splicing of the late mRNA.</text>
</comment>
<comment type="similarity">
    <text evidence="3">Belongs to the polyomaviruses coat protein VP1 family.</text>
</comment>